<accession>Q9HAV4</accession>
<accession>Q5JTE6</accession>
<accession>Q96G48</accession>
<accession>Q96HN3</accession>
<accession>Q9BWM6</accession>
<accession>Q9BZV5</accession>
<accession>Q9H9M4</accession>
<accession>Q9NT89</accession>
<accession>Q9NW39</accession>
<accession>Q9ULC9</accession>
<evidence type="ECO:0000269" key="1">
    <source>
    </source>
</evidence>
<evidence type="ECO:0000269" key="2">
    <source>
    </source>
</evidence>
<evidence type="ECO:0000269" key="3">
    <source>
    </source>
</evidence>
<evidence type="ECO:0000269" key="4">
    <source>
    </source>
</evidence>
<evidence type="ECO:0000269" key="5">
    <source>
    </source>
</evidence>
<evidence type="ECO:0000269" key="6">
    <source>
    </source>
</evidence>
<evidence type="ECO:0000269" key="7">
    <source>
    </source>
</evidence>
<evidence type="ECO:0000269" key="8">
    <source>
    </source>
</evidence>
<evidence type="ECO:0000269" key="9">
    <source>
    </source>
</evidence>
<evidence type="ECO:0000269" key="10">
    <source>
    </source>
</evidence>
<evidence type="ECO:0000269" key="11">
    <source>
    </source>
</evidence>
<evidence type="ECO:0000269" key="12">
    <source>
    </source>
</evidence>
<evidence type="ECO:0000269" key="13">
    <source>
    </source>
</evidence>
<evidence type="ECO:0000305" key="14"/>
<evidence type="ECO:0007744" key="15">
    <source>
    </source>
</evidence>
<evidence type="ECO:0007744" key="16">
    <source>
    </source>
</evidence>
<evidence type="ECO:0007744" key="17">
    <source>
    </source>
</evidence>
<evidence type="ECO:0007744" key="18">
    <source>
    </source>
</evidence>
<evidence type="ECO:0007829" key="19">
    <source>
        <dbReference type="PDB" id="3A6P"/>
    </source>
</evidence>
<evidence type="ECO:0007829" key="20">
    <source>
        <dbReference type="PDB" id="5YU6"/>
    </source>
</evidence>
<evidence type="ECO:0007829" key="21">
    <source>
        <dbReference type="PDB" id="5YU7"/>
    </source>
</evidence>
<gene>
    <name type="primary">XPO5</name>
    <name type="synonym">KIAA1291</name>
    <name type="synonym">RANBP21</name>
</gene>
<comment type="function">
    <text>Mediates the nuclear export of proteins bearing a double-stranded RNA binding domain (dsRBD) and double-stranded RNAs (cargos). XPO5 in the nucleus binds cooperatively to the RNA and to the GTPase Ran in its active GTP-bound form. Proteins containing dsRBDs can associate with this trimeric complex through the RNA. Docking of this complex to the nuclear pore complex (NPC) is mediated through binding to nucleoporins. Upon transit of a nuclear export complex into the cytoplasm, hydrolysis of Ran-GTP to Ran-GDP (induced by RANBP1 and RANGAP1, respectively) cause disassembly of the complex and release of the cargo from the export receptor. XPO5 then returns to the nuclear compartment by diffusion through the nuclear pore complex, to mediate another round of transport. The directionality of nuclear export is thought to be conferred by an asymmetric distribution of the GTP- and GDP-bound forms of Ran between the cytoplasm and nucleus. Overexpression may in some circumstances enhance RNA-mediated gene silencing (RNAi). Mediates nuclear export of isoform 5 of ADAR/ADAR1 in a RanGTP-dependent manner.</text>
</comment>
<comment type="function">
    <text evidence="6 7 10 12">Mediates the nuclear export of micro-RNA precursors, which form short hairpins (PubMed:14631048, PubMed:14681208, PubMed:15613540). Also mediates the nuclear export of synthetic short hairpin RNAs used for RNA interference. In some circumstances can also mediate the nuclear export of deacylated and aminoacylated tRNAs. Specifically recognizes dsRNAs that lack a 5'-overhang in a sequence-independent manner, have only a short 3'-overhang, and that have a double-stranded length of at least 15 base-pairs (PubMed:19965479). Binding is dependent on Ran-GTP (PubMed:19965479).</text>
</comment>
<comment type="function">
    <text evidence="4">(Microbial infection) Mediates the nuclear export of adenovirus VA1 dsRNA.</text>
</comment>
<comment type="subunit">
    <text evidence="1 2 3 5 6 8 9 11 12 13">Component of a nuclear export receptor complex composed of XPO5, RAN, dsRNA-binding proteins and dsRNA. Found in a nuclear export complex with XPO5, RAN, EEF1A1, and aminoacylated tRNA. Found in a nuclear export complex with XPO5, RAN, ILF3 and dsRNA. Found in a nuclear export complex with XPO5, RAN and pre-miRNA (PubMed:19965479). Found in a nuclear export complex with XPO5, RAN, ILF3 and minihelix VA1 dsRNA. Found in a nuclear export complex with XPO5, RAN, ILF3, ZNF346 and dsRNA. Interacts with EEF1A1, ILF3, NUP153, NUP214 and ZNF346. Interacts with RAN and cargo proteins in a GTP-dependent manner. Interacts with isoform 5 of ADAR/ADAR1 (via DRBM domains). Interacts with SMAD4; mediates nuclear export of SMAD4 (PubMed:26878725). Interacts with RAN (GTP-bound form) (PubMed:19965479).</text>
</comment>
<comment type="interaction">
    <interactant intactId="EBI-517949">
        <id>Q9HAV4</id>
    </interactant>
    <interactant intactId="EBI-2432309">
        <id>Q92876</id>
        <label>KLK6</label>
    </interactant>
    <organismsDiffer>false</organismsDiffer>
    <experiments>3</experiments>
</comment>
<comment type="subcellular location">
    <subcellularLocation>
        <location evidence="1">Nucleus</location>
    </subcellularLocation>
    <subcellularLocation>
        <location evidence="1">Cytoplasm</location>
    </subcellularLocation>
    <text>Shuttles between the nucleus and the cytoplasm.</text>
</comment>
<comment type="tissue specificity">
    <text evidence="1">Expressed in heart, brain, placenta, lung, skeletal muscle, kidney and pancreas.</text>
</comment>
<comment type="similarity">
    <text evidence="14">Belongs to the exportin family.</text>
</comment>
<comment type="sequence caution" evidence="14">
    <conflict type="erroneous initiation">
        <sequence resource="EMBL-CDS" id="AAH00129"/>
    </conflict>
</comment>
<comment type="sequence caution" evidence="14">
    <conflict type="erroneous initiation">
        <sequence resource="EMBL-CDS" id="BAA86605"/>
    </conflict>
</comment>
<comment type="sequence caution" evidence="14">
    <conflict type="frameshift">
        <sequence resource="EMBL-CDS" id="BAA91547"/>
    </conflict>
</comment>
<protein>
    <recommendedName>
        <fullName>Exportin-5</fullName>
        <shortName>Exp5</shortName>
    </recommendedName>
    <alternativeName>
        <fullName>Ran-binding protein 21</fullName>
    </alternativeName>
</protein>
<reference key="1">
    <citation type="journal article" date="2002" name="EMBO J.">
        <title>Exp5 exports eEF1A via tRNA from nuclei and synergizes with other transport pathways to confine translation to the cytoplasm.</title>
        <authorList>
            <person name="Bohnsack M.T."/>
            <person name="Regener K."/>
            <person name="Schwappach B."/>
            <person name="Saffrich R."/>
            <person name="Paraskeva E."/>
            <person name="Hartmann E."/>
            <person name="Goerlich D."/>
        </authorList>
    </citation>
    <scope>NUCLEOTIDE SEQUENCE [MRNA]</scope>
    <scope>FUNCTION IN PROTEIN AND TRNA NUCLEAR EXPORT</scope>
    <scope>IDENTIFICATION IN A NUCLEAR EXPORT RECEPTOR COMPLEX WITH EEF1A1; RAN AND TRNA</scope>
    <scope>INTERACTION WITH EEF1A1</scope>
    <scope>RNA-BINDING</scope>
</reference>
<reference key="2">
    <citation type="journal article" date="2002" name="J. Cell Biol.">
        <title>Exportin-5, a novel karyopherin, mediates nuclear export of double-stranded RNA binding proteins.</title>
        <authorList>
            <person name="Brownawell A.M."/>
            <person name="Macara I.G."/>
        </authorList>
    </citation>
    <scope>NUCLEOTIDE SEQUENCE [MRNA]</scope>
    <scope>FUNCTION IN PROTEIN NUCLEAR EXPORT</scope>
    <scope>IDENTIFICATION IN A NUCLEAR EXPORT RECEPTOR COMPLEX WITH ILF3; RAN AND DOUBLE-STRANDED RNA</scope>
    <scope>INTERACTION WITH ILF3; NUP153 AND NUP214</scope>
    <scope>SUBCELLULAR LOCATION</scope>
    <scope>TISSUE SPECIFICITY</scope>
    <source>
        <tissue>Brain</tissue>
    </source>
</reference>
<reference key="3">
    <citation type="journal article" date="1999" name="DNA Res.">
        <title>Prediction of the coding sequences of unidentified human genes. XV. The complete sequences of 100 new cDNA clones from brain which code for large proteins in vitro.</title>
        <authorList>
            <person name="Nagase T."/>
            <person name="Ishikawa K."/>
            <person name="Kikuno R."/>
            <person name="Hirosawa M."/>
            <person name="Nomura N."/>
            <person name="Ohara O."/>
        </authorList>
    </citation>
    <scope>NUCLEOTIDE SEQUENCE [LARGE SCALE MRNA]</scope>
    <source>
        <tissue>Brain</tissue>
    </source>
</reference>
<reference key="4">
    <citation type="journal article" date="2002" name="DNA Res.">
        <title>Construction of expression-ready cDNA clones for KIAA genes: manual curation of 330 KIAA cDNA clones.</title>
        <authorList>
            <person name="Nakajima D."/>
            <person name="Okazaki N."/>
            <person name="Yamakawa H."/>
            <person name="Kikuno R."/>
            <person name="Ohara O."/>
            <person name="Nagase T."/>
        </authorList>
    </citation>
    <scope>SEQUENCE REVISION</scope>
</reference>
<reference key="5">
    <citation type="journal article" date="2003" name="Nature">
        <title>The DNA sequence and analysis of human chromosome 6.</title>
        <authorList>
            <person name="Mungall A.J."/>
            <person name="Palmer S.A."/>
            <person name="Sims S.K."/>
            <person name="Edwards C.A."/>
            <person name="Ashurst J.L."/>
            <person name="Wilming L."/>
            <person name="Jones M.C."/>
            <person name="Horton R."/>
            <person name="Hunt S.E."/>
            <person name="Scott C.E."/>
            <person name="Gilbert J.G.R."/>
            <person name="Clamp M.E."/>
            <person name="Bethel G."/>
            <person name="Milne S."/>
            <person name="Ainscough R."/>
            <person name="Almeida J.P."/>
            <person name="Ambrose K.D."/>
            <person name="Andrews T.D."/>
            <person name="Ashwell R.I.S."/>
            <person name="Babbage A.K."/>
            <person name="Bagguley C.L."/>
            <person name="Bailey J."/>
            <person name="Banerjee R."/>
            <person name="Barker D.J."/>
            <person name="Barlow K.F."/>
            <person name="Bates K."/>
            <person name="Beare D.M."/>
            <person name="Beasley H."/>
            <person name="Beasley O."/>
            <person name="Bird C.P."/>
            <person name="Blakey S.E."/>
            <person name="Bray-Allen S."/>
            <person name="Brook J."/>
            <person name="Brown A.J."/>
            <person name="Brown J.Y."/>
            <person name="Burford D.C."/>
            <person name="Burrill W."/>
            <person name="Burton J."/>
            <person name="Carder C."/>
            <person name="Carter N.P."/>
            <person name="Chapman J.C."/>
            <person name="Clark S.Y."/>
            <person name="Clark G."/>
            <person name="Clee C.M."/>
            <person name="Clegg S."/>
            <person name="Cobley V."/>
            <person name="Collier R.E."/>
            <person name="Collins J.E."/>
            <person name="Colman L.K."/>
            <person name="Corby N.R."/>
            <person name="Coville G.J."/>
            <person name="Culley K.M."/>
            <person name="Dhami P."/>
            <person name="Davies J."/>
            <person name="Dunn M."/>
            <person name="Earthrowl M.E."/>
            <person name="Ellington A.E."/>
            <person name="Evans K.A."/>
            <person name="Faulkner L."/>
            <person name="Francis M.D."/>
            <person name="Frankish A."/>
            <person name="Frankland J."/>
            <person name="French L."/>
            <person name="Garner P."/>
            <person name="Garnett J."/>
            <person name="Ghori M.J."/>
            <person name="Gilby L.M."/>
            <person name="Gillson C.J."/>
            <person name="Glithero R.J."/>
            <person name="Grafham D.V."/>
            <person name="Grant M."/>
            <person name="Gribble S."/>
            <person name="Griffiths C."/>
            <person name="Griffiths M.N.D."/>
            <person name="Hall R."/>
            <person name="Halls K.S."/>
            <person name="Hammond S."/>
            <person name="Harley J.L."/>
            <person name="Hart E.A."/>
            <person name="Heath P.D."/>
            <person name="Heathcott R."/>
            <person name="Holmes S.J."/>
            <person name="Howden P.J."/>
            <person name="Howe K.L."/>
            <person name="Howell G.R."/>
            <person name="Huckle E."/>
            <person name="Humphray S.J."/>
            <person name="Humphries M.D."/>
            <person name="Hunt A.R."/>
            <person name="Johnson C.M."/>
            <person name="Joy A.A."/>
            <person name="Kay M."/>
            <person name="Keenan S.J."/>
            <person name="Kimberley A.M."/>
            <person name="King A."/>
            <person name="Laird G.K."/>
            <person name="Langford C."/>
            <person name="Lawlor S."/>
            <person name="Leongamornlert D.A."/>
            <person name="Leversha M."/>
            <person name="Lloyd C.R."/>
            <person name="Lloyd D.M."/>
            <person name="Loveland J.E."/>
            <person name="Lovell J."/>
            <person name="Martin S."/>
            <person name="Mashreghi-Mohammadi M."/>
            <person name="Maslen G.L."/>
            <person name="Matthews L."/>
            <person name="McCann O.T."/>
            <person name="McLaren S.J."/>
            <person name="McLay K."/>
            <person name="McMurray A."/>
            <person name="Moore M.J.F."/>
            <person name="Mullikin J.C."/>
            <person name="Niblett D."/>
            <person name="Nickerson T."/>
            <person name="Novik K.L."/>
            <person name="Oliver K."/>
            <person name="Overton-Larty E.K."/>
            <person name="Parker A."/>
            <person name="Patel R."/>
            <person name="Pearce A.V."/>
            <person name="Peck A.I."/>
            <person name="Phillimore B.J.C.T."/>
            <person name="Phillips S."/>
            <person name="Plumb R.W."/>
            <person name="Porter K.M."/>
            <person name="Ramsey Y."/>
            <person name="Ranby S.A."/>
            <person name="Rice C.M."/>
            <person name="Ross M.T."/>
            <person name="Searle S.M."/>
            <person name="Sehra H.K."/>
            <person name="Sheridan E."/>
            <person name="Skuce C.D."/>
            <person name="Smith S."/>
            <person name="Smith M."/>
            <person name="Spraggon L."/>
            <person name="Squares S.L."/>
            <person name="Steward C.A."/>
            <person name="Sycamore N."/>
            <person name="Tamlyn-Hall G."/>
            <person name="Tester J."/>
            <person name="Theaker A.J."/>
            <person name="Thomas D.W."/>
            <person name="Thorpe A."/>
            <person name="Tracey A."/>
            <person name="Tromans A."/>
            <person name="Tubby B."/>
            <person name="Wall M."/>
            <person name="Wallis J.M."/>
            <person name="West A.P."/>
            <person name="White S.S."/>
            <person name="Whitehead S.L."/>
            <person name="Whittaker H."/>
            <person name="Wild A."/>
            <person name="Willey D.J."/>
            <person name="Wilmer T.E."/>
            <person name="Wood J.M."/>
            <person name="Wray P.W."/>
            <person name="Wyatt J.C."/>
            <person name="Young L."/>
            <person name="Younger R.M."/>
            <person name="Bentley D.R."/>
            <person name="Coulson A."/>
            <person name="Durbin R.M."/>
            <person name="Hubbard T."/>
            <person name="Sulston J.E."/>
            <person name="Dunham I."/>
            <person name="Rogers J."/>
            <person name="Beck S."/>
        </authorList>
    </citation>
    <scope>NUCLEOTIDE SEQUENCE [LARGE SCALE GENOMIC DNA]</scope>
</reference>
<reference key="6">
    <citation type="journal article" date="2004" name="Genome Res.">
        <title>The status, quality, and expansion of the NIH full-length cDNA project: the Mammalian Gene Collection (MGC).</title>
        <authorList>
            <consortium name="The MGC Project Team"/>
        </authorList>
    </citation>
    <scope>NUCLEOTIDE SEQUENCE [LARGE SCALE MRNA]</scope>
    <source>
        <tissue>Ascites</tissue>
        <tissue>Placenta</tissue>
        <tissue>Retinoblastoma</tissue>
        <tissue>Rhabdomyosarcoma</tissue>
    </source>
</reference>
<reference key="7">
    <citation type="submission" date="2005-06" db="UniProtKB">
        <authorList>
            <person name="Bienvenut W.V."/>
        </authorList>
    </citation>
    <scope>PROTEIN SEQUENCE OF 189-203 AND 387-396</scope>
    <scope>IDENTIFICATION BY MASS SPECTROMETRY</scope>
    <source>
        <tissue>B-cell lymphoma</tissue>
    </source>
</reference>
<reference key="8">
    <citation type="journal article" date="2007" name="BMC Genomics">
        <title>The full-ORF clone resource of the German cDNA consortium.</title>
        <authorList>
            <person name="Bechtel S."/>
            <person name="Rosenfelder H."/>
            <person name="Duda A."/>
            <person name="Schmidt C.P."/>
            <person name="Ernst U."/>
            <person name="Wellenreuther R."/>
            <person name="Mehrle A."/>
            <person name="Schuster C."/>
            <person name="Bahr A."/>
            <person name="Bloecker H."/>
            <person name="Heubner D."/>
            <person name="Hoerlein A."/>
            <person name="Michel G."/>
            <person name="Wedler H."/>
            <person name="Koehrer K."/>
            <person name="Ottenwaelder B."/>
            <person name="Poustka A."/>
            <person name="Wiemann S."/>
            <person name="Schupp I."/>
        </authorList>
    </citation>
    <scope>NUCLEOTIDE SEQUENCE [LARGE SCALE MRNA] OF 450-1204</scope>
    <source>
        <tissue>Testis</tissue>
    </source>
</reference>
<reference key="9">
    <citation type="journal article" date="2004" name="Nat. Genet.">
        <title>Complete sequencing and characterization of 21,243 full-length human cDNAs.</title>
        <authorList>
            <person name="Ota T."/>
            <person name="Suzuki Y."/>
            <person name="Nishikawa T."/>
            <person name="Otsuki T."/>
            <person name="Sugiyama T."/>
            <person name="Irie R."/>
            <person name="Wakamatsu A."/>
            <person name="Hayashi K."/>
            <person name="Sato H."/>
            <person name="Nagai K."/>
            <person name="Kimura K."/>
            <person name="Makita H."/>
            <person name="Sekine M."/>
            <person name="Obayashi M."/>
            <person name="Nishi T."/>
            <person name="Shibahara T."/>
            <person name="Tanaka T."/>
            <person name="Ishii S."/>
            <person name="Yamamoto J."/>
            <person name="Saito K."/>
            <person name="Kawai Y."/>
            <person name="Isono Y."/>
            <person name="Nakamura Y."/>
            <person name="Nagahari K."/>
            <person name="Murakami K."/>
            <person name="Yasuda T."/>
            <person name="Iwayanagi T."/>
            <person name="Wagatsuma M."/>
            <person name="Shiratori A."/>
            <person name="Sudo H."/>
            <person name="Hosoiri T."/>
            <person name="Kaku Y."/>
            <person name="Kodaira H."/>
            <person name="Kondo H."/>
            <person name="Sugawara M."/>
            <person name="Takahashi M."/>
            <person name="Kanda K."/>
            <person name="Yokoi T."/>
            <person name="Furuya T."/>
            <person name="Kikkawa E."/>
            <person name="Omura Y."/>
            <person name="Abe K."/>
            <person name="Kamihara K."/>
            <person name="Katsuta N."/>
            <person name="Sato K."/>
            <person name="Tanikawa M."/>
            <person name="Yamazaki M."/>
            <person name="Ninomiya K."/>
            <person name="Ishibashi T."/>
            <person name="Yamashita H."/>
            <person name="Murakawa K."/>
            <person name="Fujimori K."/>
            <person name="Tanai H."/>
            <person name="Kimata M."/>
            <person name="Watanabe M."/>
            <person name="Hiraoka S."/>
            <person name="Chiba Y."/>
            <person name="Ishida S."/>
            <person name="Ono Y."/>
            <person name="Takiguchi S."/>
            <person name="Watanabe S."/>
            <person name="Yosida M."/>
            <person name="Hotuta T."/>
            <person name="Kusano J."/>
            <person name="Kanehori K."/>
            <person name="Takahashi-Fujii A."/>
            <person name="Hara H."/>
            <person name="Tanase T.-O."/>
            <person name="Nomura Y."/>
            <person name="Togiya S."/>
            <person name="Komai F."/>
            <person name="Hara R."/>
            <person name="Takeuchi K."/>
            <person name="Arita M."/>
            <person name="Imose N."/>
            <person name="Musashino K."/>
            <person name="Yuuki H."/>
            <person name="Oshima A."/>
            <person name="Sasaki N."/>
            <person name="Aotsuka S."/>
            <person name="Yoshikawa Y."/>
            <person name="Matsunawa H."/>
            <person name="Ichihara T."/>
            <person name="Shiohata N."/>
            <person name="Sano S."/>
            <person name="Moriya S."/>
            <person name="Momiyama H."/>
            <person name="Satoh N."/>
            <person name="Takami S."/>
            <person name="Terashima Y."/>
            <person name="Suzuki O."/>
            <person name="Nakagawa S."/>
            <person name="Senoh A."/>
            <person name="Mizoguchi H."/>
            <person name="Goto Y."/>
            <person name="Shimizu F."/>
            <person name="Wakebe H."/>
            <person name="Hishigaki H."/>
            <person name="Watanabe T."/>
            <person name="Sugiyama A."/>
            <person name="Takemoto M."/>
            <person name="Kawakami B."/>
            <person name="Yamazaki M."/>
            <person name="Watanabe K."/>
            <person name="Kumagai A."/>
            <person name="Itakura S."/>
            <person name="Fukuzumi Y."/>
            <person name="Fujimori Y."/>
            <person name="Komiyama M."/>
            <person name="Tashiro H."/>
            <person name="Tanigami A."/>
            <person name="Fujiwara T."/>
            <person name="Ono T."/>
            <person name="Yamada K."/>
            <person name="Fujii Y."/>
            <person name="Ozaki K."/>
            <person name="Hirao M."/>
            <person name="Ohmori Y."/>
            <person name="Kawabata A."/>
            <person name="Hikiji T."/>
            <person name="Kobatake N."/>
            <person name="Inagaki H."/>
            <person name="Ikema Y."/>
            <person name="Okamoto S."/>
            <person name="Okitani R."/>
            <person name="Kawakami T."/>
            <person name="Noguchi S."/>
            <person name="Itoh T."/>
            <person name="Shigeta K."/>
            <person name="Senba T."/>
            <person name="Matsumura K."/>
            <person name="Nakajima Y."/>
            <person name="Mizuno T."/>
            <person name="Morinaga M."/>
            <person name="Sasaki M."/>
            <person name="Togashi T."/>
            <person name="Oyama M."/>
            <person name="Hata H."/>
            <person name="Watanabe M."/>
            <person name="Komatsu T."/>
            <person name="Mizushima-Sugano J."/>
            <person name="Satoh T."/>
            <person name="Shirai Y."/>
            <person name="Takahashi Y."/>
            <person name="Nakagawa K."/>
            <person name="Okumura K."/>
            <person name="Nagase T."/>
            <person name="Nomura N."/>
            <person name="Kikuchi H."/>
            <person name="Masuho Y."/>
            <person name="Yamashita R."/>
            <person name="Nakai K."/>
            <person name="Yada T."/>
            <person name="Nakamura Y."/>
            <person name="Ohara O."/>
            <person name="Isogai T."/>
            <person name="Sugano S."/>
        </authorList>
    </citation>
    <scope>NUCLEOTIDE SEQUENCE [LARGE SCALE MRNA] OF 537-1204</scope>
    <source>
        <tissue>Teratocarcinoma</tissue>
    </source>
</reference>
<reference key="10">
    <citation type="journal article" date="2002" name="EMBO J.">
        <title>Exportin-5-mediated nuclear export of eukaryotic elongation factor 1A and tRNA.</title>
        <authorList>
            <person name="Calado A."/>
            <person name="Treichel N."/>
            <person name="Mueller E.-C."/>
            <person name="Otto A."/>
            <person name="Kutay U."/>
        </authorList>
    </citation>
    <scope>FUNCTION IN PROTEIN AND TRNA NUCLEAR EXPORT</scope>
    <scope>IDENTIFICATION IN A NUCLEAR EXPORT RECEPTOR COMPLEX WITH EEF1A1; RAN AND TRNA</scope>
    <scope>INTERACTION WITH EEF1A1</scope>
    <scope>IDENTIFICATION BY MASS SPECTROMETRY</scope>
    <scope>RNA-BINDING</scope>
</reference>
<reference key="11">
    <citation type="journal article" date="2003" name="Genes Dev.">
        <title>Exportin-5 mediates the nuclear export of pre-microRNAs and short hairpin RNAs.</title>
        <authorList>
            <person name="Yi R."/>
            <person name="Qin Y."/>
            <person name="Macara I.G."/>
            <person name="Cullen B.R."/>
        </authorList>
    </citation>
    <scope>FUNCTION IN PRE-MIRNA EXPORT</scope>
    <scope>RNA-BINDING</scope>
</reference>
<reference key="12">
    <citation type="journal article" date="2003" name="J. Biol. Chem.">
        <title>Exportin-5 mediates nuclear export of minihelix-containing RNAs.</title>
        <authorList>
            <person name="Gwizdek C."/>
            <person name="Ossareh-Nazari B."/>
            <person name="Brownawell A.M."/>
            <person name="Doglio A."/>
            <person name="Bertrand E."/>
            <person name="Macara I.G."/>
            <person name="Dargemont C."/>
        </authorList>
    </citation>
    <scope>FUNCTION IN ADENOVIRUS VA1 RNA EXPORT (MICROBIAL INFECTION)</scope>
    <scope>RNA-BINDING (MICROBIAL INFECTION)</scope>
</reference>
<reference key="13">
    <citation type="journal article" date="2004" name="J. Biol. Chem.">
        <title>Minihelix-containing RNAs mediate exportin-5-dependent nuclear export of the double-stranded RNA-binding protein ILF3.</title>
        <authorList>
            <person name="Gwizdek C."/>
            <person name="Ossareh-Nazari B."/>
            <person name="Brownawell A.M."/>
            <person name="Evers S."/>
            <person name="Macara I.G."/>
            <person name="Dargemont C."/>
        </authorList>
    </citation>
    <scope>FUNCTION IN PROTEIN AND ADENOVIRUS VA1 RNA EXPORT</scope>
    <scope>IDENTIFICATION IN A NUCLEAR EXPORT RECEPTOR COMPLEX WITH ILF3; RAN AND VA1 RNA</scope>
    <scope>RNA-BINDING</scope>
</reference>
<reference key="14">
    <citation type="journal article" date="2004" name="Mol. Cell. Biol.">
        <title>Nucleocytoplasmic shuttling of JAZ, a new cargo protein for exportin-5.</title>
        <authorList>
            <person name="Chen T."/>
            <person name="Brownawell A.M."/>
            <person name="Macara I.G."/>
        </authorList>
    </citation>
    <scope>FUNCTION IN PROTEIN AND DOUBLE-STRANDED RNA EXPORT</scope>
    <scope>IDENTIFICATION IN A NUCLEAR EXPORT RECEPTOR COMPLEX WITH RAN; ILF3; ZNF346 AND DOUBLE-STRANDED RNA</scope>
    <scope>INTERACTION WITH ILF3 AND ZNF346</scope>
</reference>
<reference key="15">
    <citation type="journal article" date="2004" name="RNA">
        <title>Exportin 5 is a RanGTP-dependent dsRNA-binding protein that mediates nuclear export of pre-miRNAs.</title>
        <authorList>
            <person name="Bohnsack M.T."/>
            <person name="Czaplinski K."/>
            <person name="Goerlich D."/>
        </authorList>
    </citation>
    <scope>FUNCTION IN PRE-MIRNA EXPORT</scope>
    <scope>IDENTIFICATION IN A NUCLEAR EXPORT RECEPTOR COMPLEX WITH RAN AND PRE-MIRNA</scope>
    <scope>RNA-BINDING</scope>
</reference>
<reference key="16">
    <citation type="journal article" date="2004" name="Science">
        <title>Nuclear export of microRNA precursors.</title>
        <authorList>
            <person name="Lund E."/>
            <person name="Guettinger S."/>
            <person name="Calado A."/>
            <person name="Dahlberg J.E."/>
            <person name="Kutay U."/>
        </authorList>
    </citation>
    <scope>FUNCTION IN PRE-MIRNA EXPORT</scope>
    <scope>IDENTIFICATION IN A NUCLEAR EXPORT RECEPTOR COMPLEX WITH RAN AND PRE-MIRNA</scope>
    <scope>RNA-BINDING</scope>
</reference>
<reference key="17">
    <citation type="journal article" date="2005" name="RNA">
        <title>Overexpression of exportin 5 enhances RNA interference mediated by short hairpin RNAs and microRNAs.</title>
        <authorList>
            <person name="Yi R."/>
            <person name="Doehle B.P."/>
            <person name="Qin Y."/>
            <person name="Macara I.G."/>
            <person name="Cullen B.R."/>
        </authorList>
    </citation>
    <scope>FUNCTION IN PRE-MIRNA EXPORT</scope>
</reference>
<reference key="18">
    <citation type="journal article" date="2008" name="Mol. Cell">
        <title>Kinase-selective enrichment enables quantitative phosphoproteomics of the kinome across the cell cycle.</title>
        <authorList>
            <person name="Daub H."/>
            <person name="Olsen J.V."/>
            <person name="Bairlein M."/>
            <person name="Gnad F."/>
            <person name="Oppermann F.S."/>
            <person name="Korner R."/>
            <person name="Greff Z."/>
            <person name="Keri G."/>
            <person name="Stemmann O."/>
            <person name="Mann M."/>
        </authorList>
    </citation>
    <scope>PHOSPHORYLATION [LARGE SCALE ANALYSIS] AT SER-826</scope>
    <scope>IDENTIFICATION BY MASS SPECTROMETRY [LARGE SCALE ANALYSIS]</scope>
    <source>
        <tissue>Cervix carcinoma</tissue>
    </source>
</reference>
<reference key="19">
    <citation type="journal article" date="2009" name="Anal. Chem.">
        <title>Lys-N and trypsin cover complementary parts of the phosphoproteome in a refined SCX-based approach.</title>
        <authorList>
            <person name="Gauci S."/>
            <person name="Helbig A.O."/>
            <person name="Slijper M."/>
            <person name="Krijgsveld J."/>
            <person name="Heck A.J."/>
            <person name="Mohammed S."/>
        </authorList>
    </citation>
    <scope>ACETYLATION [LARGE SCALE ANALYSIS] AT ALA-2</scope>
    <scope>CLEAVAGE OF INITIATOR METHIONINE [LARGE SCALE ANALYSIS]</scope>
    <scope>IDENTIFICATION BY MASS SPECTROMETRY [LARGE SCALE ANALYSIS]</scope>
</reference>
<reference key="20">
    <citation type="journal article" date="2009" name="Mol. Cell. Biol.">
        <title>RNA-regulated interaction of transportin-1 and exportin-5 with the double-stranded RNA-binding domain regulates nucleocytoplasmic shuttling of ADAR1.</title>
        <authorList>
            <person name="Fritz J."/>
            <person name="Strehblow A."/>
            <person name="Taschner A."/>
            <person name="Schopoff S."/>
            <person name="Pasierbek P."/>
            <person name="Jantsch M.F."/>
        </authorList>
    </citation>
    <scope>FUNCTION</scope>
    <scope>INTERACTION WITH ADAR</scope>
</reference>
<reference key="21">
    <citation type="journal article" date="2009" name="Science">
        <title>Lysine acetylation targets protein complexes and co-regulates major cellular functions.</title>
        <authorList>
            <person name="Choudhary C."/>
            <person name="Kumar C."/>
            <person name="Gnad F."/>
            <person name="Nielsen M.L."/>
            <person name="Rehman M."/>
            <person name="Walther T.C."/>
            <person name="Olsen J.V."/>
            <person name="Mann M."/>
        </authorList>
    </citation>
    <scope>ACETYLATION [LARGE SCALE ANALYSIS] AT LYS-396</scope>
    <scope>IDENTIFICATION BY MASS SPECTROMETRY [LARGE SCALE ANALYSIS]</scope>
</reference>
<reference key="22">
    <citation type="journal article" date="2011" name="BMC Syst. Biol.">
        <title>Initial characterization of the human central proteome.</title>
        <authorList>
            <person name="Burkard T.R."/>
            <person name="Planyavsky M."/>
            <person name="Kaupe I."/>
            <person name="Breitwieser F.P."/>
            <person name="Buerckstuemmer T."/>
            <person name="Bennett K.L."/>
            <person name="Superti-Furga G."/>
            <person name="Colinge J."/>
        </authorList>
    </citation>
    <scope>IDENTIFICATION BY MASS SPECTROMETRY [LARGE SCALE ANALYSIS]</scope>
</reference>
<reference key="23">
    <citation type="journal article" date="2012" name="Mol. Cell. Proteomics">
        <title>Comparative large-scale characterisation of plant vs. mammal proteins reveals similar and idiosyncratic N-alpha acetylation features.</title>
        <authorList>
            <person name="Bienvenut W.V."/>
            <person name="Sumpton D."/>
            <person name="Martinez A."/>
            <person name="Lilla S."/>
            <person name="Espagne C."/>
            <person name="Meinnel T."/>
            <person name="Giglione C."/>
        </authorList>
    </citation>
    <scope>ACETYLATION [LARGE SCALE ANALYSIS] AT ALA-2</scope>
    <scope>CLEAVAGE OF INITIATOR METHIONINE [LARGE SCALE ANALYSIS]</scope>
    <scope>IDENTIFICATION BY MASS SPECTROMETRY [LARGE SCALE ANALYSIS]</scope>
</reference>
<reference key="24">
    <citation type="journal article" date="2009" name="Science">
        <title>A high-resolution structure of the pre-microRNA nuclear export machinery.</title>
        <authorList>
            <person name="Okada C."/>
            <person name="Yamashita E."/>
            <person name="Lee S.J."/>
            <person name="Shibata S."/>
            <person name="Katahira J."/>
            <person name="Nakagawa A."/>
            <person name="Yoneda Y."/>
            <person name="Tsukihara T."/>
        </authorList>
    </citation>
    <scope>X-RAY CRYSTALLOGRAPHY (2.92 ANGSTROMS) IN COMPLEX WITH DOG RAN; PRE-MIRNA; GTP</scope>
    <scope>INTERACTION WITH DOG RAN</scope>
</reference>
<reference key="25">
    <citation type="journal article" date="2016" name="Nat. Genet.">
        <title>Mutations in nuclear pore genes NUP93, NUP205 and XPO5 cause steroid-resistant nephrotic syndrome.</title>
        <authorList>
            <person name="Braun D.A."/>
            <person name="Sadowski C.E."/>
            <person name="Kohl S."/>
            <person name="Lovric S."/>
            <person name="Astrinidis S.A."/>
            <person name="Pabst W.L."/>
            <person name="Gee H.Y."/>
            <person name="Ashraf S."/>
            <person name="Lawson J.A."/>
            <person name="Shril S."/>
            <person name="Airik M."/>
            <person name="Tan W."/>
            <person name="Schapiro D."/>
            <person name="Rao J."/>
            <person name="Choi W.I."/>
            <person name="Hermle T."/>
            <person name="Kemper M.J."/>
            <person name="Pohl M."/>
            <person name="Ozaltin F."/>
            <person name="Konrad M."/>
            <person name="Bogdanovic R."/>
            <person name="Buescher R."/>
            <person name="Helmchen U."/>
            <person name="Serdaroglu E."/>
            <person name="Lifton R.P."/>
            <person name="Antonin W."/>
            <person name="Hildebrandt F."/>
        </authorList>
    </citation>
    <scope>VARIANT ILE-552</scope>
    <scope>INTERACTION WITH SMAD4</scope>
</reference>
<feature type="initiator methionine" description="Removed" evidence="16 18">
    <location>
        <position position="1"/>
    </location>
</feature>
<feature type="chain" id="PRO_0000235299" description="Exportin-5">
    <location>
        <begin position="2"/>
        <end position="1204"/>
    </location>
</feature>
<feature type="region of interest" description="Necessary for interaction with Ran">
    <location>
        <begin position="2"/>
        <end position="108"/>
    </location>
</feature>
<feature type="region of interest" description="Necessary for interaction with ILF3">
    <location>
        <begin position="533"/>
        <end position="640"/>
    </location>
</feature>
<feature type="region of interest" description="Pre-miRNA binding" evidence="12">
    <location>
        <begin position="641"/>
        <end position="642"/>
    </location>
</feature>
<feature type="site" description="Pre-miRNA binding" evidence="12">
    <location>
        <position position="441"/>
    </location>
</feature>
<feature type="site" description="Pre-miRNA binding" evidence="12">
    <location>
        <position position="448"/>
    </location>
</feature>
<feature type="site" description="Pre-miRNA binding" evidence="12">
    <location>
        <position position="718"/>
    </location>
</feature>
<feature type="site" description="Pre-miRNA binding" evidence="12">
    <location>
        <position position="1045"/>
    </location>
</feature>
<feature type="modified residue" description="N-acetylalanine" evidence="16 18">
    <location>
        <position position="2"/>
    </location>
</feature>
<feature type="modified residue" description="N6-acetyllysine" evidence="17">
    <location>
        <position position="396"/>
    </location>
</feature>
<feature type="modified residue" description="Phosphoserine" evidence="15">
    <location>
        <position position="826"/>
    </location>
</feature>
<feature type="sequence variant" id="VAR_048960" description="In dbSNP:rs34324334.">
    <original>S</original>
    <variation>N</variation>
    <location>
        <position position="241"/>
    </location>
</feature>
<feature type="sequence variant" id="VAR_076472" description="Found in a patient with nephrotic syndrome; uncertain significance; dbSNP:rs11544379." evidence="13">
    <original>V</original>
    <variation>I</variation>
    <location>
        <position position="552"/>
    </location>
</feature>
<feature type="sequence variant" id="VAR_028032" description="In dbSNP:rs12173786.">
    <original>K</original>
    <variation>N</variation>
    <location>
        <position position="610"/>
    </location>
</feature>
<feature type="sequence conflict" description="In Ref. 1; AAG53603." evidence="14" ref="1">
    <original>G</original>
    <variation>S</variation>
    <location>
        <position position="81"/>
    </location>
</feature>
<feature type="sequence conflict" description="In Ref. 3; BAA86605." evidence="14" ref="3">
    <original>A</original>
    <variation>V</variation>
    <location>
        <position position="697"/>
    </location>
</feature>
<feature type="sequence conflict" description="In Ref. 5; BAB14200." evidence="14" ref="5">
    <original>A</original>
    <variation>T</variation>
    <location>
        <position position="988"/>
    </location>
</feature>
<feature type="sequence conflict" description="In Ref. 5; BAA91547." evidence="14" ref="5">
    <original>K</original>
    <variation>E</variation>
    <location>
        <position position="1151"/>
    </location>
</feature>
<feature type="helix" evidence="19">
    <location>
        <begin position="6"/>
        <end position="21"/>
    </location>
</feature>
<feature type="helix" evidence="19">
    <location>
        <begin position="27"/>
        <end position="43"/>
    </location>
</feature>
<feature type="helix" evidence="19">
    <location>
        <begin position="47"/>
        <end position="54"/>
    </location>
</feature>
<feature type="helix" evidence="19">
    <location>
        <begin position="61"/>
        <end position="77"/>
    </location>
</feature>
<feature type="helix" evidence="19">
    <location>
        <begin position="79"/>
        <end position="81"/>
    </location>
</feature>
<feature type="helix" evidence="19">
    <location>
        <begin position="84"/>
        <end position="100"/>
    </location>
</feature>
<feature type="turn" evidence="20">
    <location>
        <begin position="105"/>
        <end position="107"/>
    </location>
</feature>
<feature type="helix" evidence="19">
    <location>
        <begin position="110"/>
        <end position="127"/>
    </location>
</feature>
<feature type="turn" evidence="19">
    <location>
        <begin position="129"/>
        <end position="131"/>
    </location>
</feature>
<feature type="helix" evidence="19">
    <location>
        <begin position="135"/>
        <end position="144"/>
    </location>
</feature>
<feature type="helix" evidence="19">
    <location>
        <begin position="147"/>
        <end position="165"/>
    </location>
</feature>
<feature type="helix" evidence="19">
    <location>
        <begin position="172"/>
        <end position="184"/>
    </location>
</feature>
<feature type="helix" evidence="19">
    <location>
        <begin position="186"/>
        <end position="207"/>
    </location>
</feature>
<feature type="helix" evidence="19">
    <location>
        <begin position="214"/>
        <end position="232"/>
    </location>
</feature>
<feature type="turn" evidence="19">
    <location>
        <begin position="233"/>
        <end position="237"/>
    </location>
</feature>
<feature type="helix" evidence="19">
    <location>
        <begin position="240"/>
        <end position="244"/>
    </location>
</feature>
<feature type="turn" evidence="19">
    <location>
        <begin position="245"/>
        <end position="247"/>
    </location>
</feature>
<feature type="helix" evidence="19">
    <location>
        <begin position="249"/>
        <end position="256"/>
    </location>
</feature>
<feature type="helix" evidence="19">
    <location>
        <begin position="257"/>
        <end position="259"/>
    </location>
</feature>
<feature type="turn" evidence="19">
    <location>
        <begin position="261"/>
        <end position="263"/>
    </location>
</feature>
<feature type="helix" evidence="19">
    <location>
        <begin position="264"/>
        <end position="275"/>
    </location>
</feature>
<feature type="helix" evidence="19">
    <location>
        <begin position="281"/>
        <end position="284"/>
    </location>
</feature>
<feature type="helix" evidence="19">
    <location>
        <begin position="285"/>
        <end position="291"/>
    </location>
</feature>
<feature type="helix" evidence="19">
    <location>
        <begin position="293"/>
        <end position="304"/>
    </location>
</feature>
<feature type="helix" evidence="19">
    <location>
        <begin position="313"/>
        <end position="338"/>
    </location>
</feature>
<feature type="strand" evidence="21">
    <location>
        <begin position="340"/>
        <end position="342"/>
    </location>
</feature>
<feature type="helix" evidence="19">
    <location>
        <begin position="349"/>
        <end position="360"/>
    </location>
</feature>
<feature type="strand" evidence="20">
    <location>
        <begin position="361"/>
        <end position="363"/>
    </location>
</feature>
<feature type="helix" evidence="19">
    <location>
        <begin position="365"/>
        <end position="379"/>
    </location>
</feature>
<feature type="turn" evidence="19">
    <location>
        <begin position="382"/>
        <end position="386"/>
    </location>
</feature>
<feature type="helix" evidence="19">
    <location>
        <begin position="388"/>
        <end position="405"/>
    </location>
</feature>
<feature type="helix" evidence="19">
    <location>
        <begin position="418"/>
        <end position="425"/>
    </location>
</feature>
<feature type="helix" evidence="19">
    <location>
        <begin position="429"/>
        <end position="453"/>
    </location>
</feature>
<feature type="helix" evidence="19">
    <location>
        <begin position="455"/>
        <end position="470"/>
    </location>
</feature>
<feature type="strand" evidence="19">
    <location>
        <begin position="495"/>
        <end position="497"/>
    </location>
</feature>
<feature type="helix" evidence="19">
    <location>
        <begin position="498"/>
        <end position="520"/>
    </location>
</feature>
<feature type="turn" evidence="20">
    <location>
        <begin position="523"/>
        <end position="525"/>
    </location>
</feature>
<feature type="helix" evidence="19">
    <location>
        <begin position="528"/>
        <end position="540"/>
    </location>
</feature>
<feature type="helix" evidence="19">
    <location>
        <begin position="546"/>
        <end position="559"/>
    </location>
</feature>
<feature type="helix" evidence="19">
    <location>
        <begin position="560"/>
        <end position="564"/>
    </location>
</feature>
<feature type="helix" evidence="19">
    <location>
        <begin position="567"/>
        <end position="569"/>
    </location>
</feature>
<feature type="helix" evidence="19">
    <location>
        <begin position="570"/>
        <end position="582"/>
    </location>
</feature>
<feature type="strand" evidence="20">
    <location>
        <begin position="588"/>
        <end position="591"/>
    </location>
</feature>
<feature type="helix" evidence="19">
    <location>
        <begin position="595"/>
        <end position="614"/>
    </location>
</feature>
<feature type="helix" evidence="19">
    <location>
        <begin position="616"/>
        <end position="619"/>
    </location>
</feature>
<feature type="helix" evidence="19">
    <location>
        <begin position="620"/>
        <end position="622"/>
    </location>
</feature>
<feature type="helix" evidence="19">
    <location>
        <begin position="623"/>
        <end position="635"/>
    </location>
</feature>
<feature type="turn" evidence="20">
    <location>
        <begin position="637"/>
        <end position="639"/>
    </location>
</feature>
<feature type="helix" evidence="19">
    <location>
        <begin position="642"/>
        <end position="656"/>
    </location>
</feature>
<feature type="helix" evidence="19">
    <location>
        <begin position="657"/>
        <end position="659"/>
    </location>
</feature>
<feature type="helix" evidence="19">
    <location>
        <begin position="662"/>
        <end position="680"/>
    </location>
</feature>
<feature type="helix" evidence="19">
    <location>
        <begin position="683"/>
        <end position="690"/>
    </location>
</feature>
<feature type="helix" evidence="19">
    <location>
        <begin position="692"/>
        <end position="699"/>
    </location>
</feature>
<feature type="helix" evidence="19">
    <location>
        <begin position="713"/>
        <end position="734"/>
    </location>
</feature>
<feature type="helix" evidence="19">
    <location>
        <begin position="741"/>
        <end position="746"/>
    </location>
</feature>
<feature type="strand" evidence="19">
    <location>
        <begin position="750"/>
        <end position="753"/>
    </location>
</feature>
<feature type="strand" evidence="21">
    <location>
        <begin position="755"/>
        <end position="757"/>
    </location>
</feature>
<feature type="strand" evidence="19">
    <location>
        <begin position="759"/>
        <end position="761"/>
    </location>
</feature>
<feature type="helix" evidence="19">
    <location>
        <begin position="766"/>
        <end position="770"/>
    </location>
</feature>
<feature type="helix" evidence="19">
    <location>
        <begin position="773"/>
        <end position="785"/>
    </location>
</feature>
<feature type="helix" evidence="19">
    <location>
        <begin position="789"/>
        <end position="792"/>
    </location>
</feature>
<feature type="helix" evidence="19">
    <location>
        <begin position="797"/>
        <end position="799"/>
    </location>
</feature>
<feature type="turn" evidence="19">
    <location>
        <begin position="800"/>
        <end position="803"/>
    </location>
</feature>
<feature type="helix" evidence="19">
    <location>
        <begin position="807"/>
        <end position="813"/>
    </location>
</feature>
<feature type="strand" evidence="21">
    <location>
        <begin position="823"/>
        <end position="825"/>
    </location>
</feature>
<feature type="helix" evidence="19">
    <location>
        <begin position="832"/>
        <end position="858"/>
    </location>
</feature>
<feature type="turn" evidence="19">
    <location>
        <begin position="860"/>
        <end position="864"/>
    </location>
</feature>
<feature type="helix" evidence="19">
    <location>
        <begin position="868"/>
        <end position="875"/>
    </location>
</feature>
<feature type="turn" evidence="19">
    <location>
        <begin position="880"/>
        <end position="882"/>
    </location>
</feature>
<feature type="helix" evidence="19">
    <location>
        <begin position="885"/>
        <end position="894"/>
    </location>
</feature>
<feature type="helix" evidence="19">
    <location>
        <begin position="896"/>
        <end position="901"/>
    </location>
</feature>
<feature type="helix" evidence="19">
    <location>
        <begin position="905"/>
        <end position="907"/>
    </location>
</feature>
<feature type="turn" evidence="19">
    <location>
        <begin position="908"/>
        <end position="911"/>
    </location>
</feature>
<feature type="helix" evidence="19">
    <location>
        <begin position="912"/>
        <end position="935"/>
    </location>
</feature>
<feature type="helix" evidence="19">
    <location>
        <begin position="953"/>
        <end position="977"/>
    </location>
</feature>
<feature type="helix" evidence="19">
    <location>
        <begin position="1013"/>
        <end position="1019"/>
    </location>
</feature>
<feature type="helix" evidence="19">
    <location>
        <begin position="1022"/>
        <end position="1035"/>
    </location>
</feature>
<feature type="helix" evidence="19">
    <location>
        <begin position="1041"/>
        <end position="1050"/>
    </location>
</feature>
<feature type="helix" evidence="19">
    <location>
        <begin position="1052"/>
        <end position="1056"/>
    </location>
</feature>
<feature type="helix" evidence="19">
    <location>
        <begin position="1066"/>
        <end position="1082"/>
    </location>
</feature>
<feature type="helix" evidence="19">
    <location>
        <begin position="1087"/>
        <end position="1103"/>
    </location>
</feature>
<feature type="turn" evidence="19">
    <location>
        <begin position="1105"/>
        <end position="1107"/>
    </location>
</feature>
<feature type="helix" evidence="19">
    <location>
        <begin position="1111"/>
        <end position="1115"/>
    </location>
</feature>
<feature type="strand" evidence="19">
    <location>
        <begin position="1118"/>
        <end position="1120"/>
    </location>
</feature>
<feature type="helix" evidence="19">
    <location>
        <begin position="1123"/>
        <end position="1132"/>
    </location>
</feature>
<feature type="turn" evidence="21">
    <location>
        <begin position="1138"/>
        <end position="1140"/>
    </location>
</feature>
<feature type="helix" evidence="21">
    <location>
        <begin position="1147"/>
        <end position="1150"/>
    </location>
</feature>
<feature type="turn" evidence="21">
    <location>
        <begin position="1151"/>
        <end position="1153"/>
    </location>
</feature>
<feature type="strand" evidence="21">
    <location>
        <begin position="1164"/>
        <end position="1166"/>
    </location>
</feature>
<feature type="helix" evidence="21">
    <location>
        <begin position="1167"/>
        <end position="1171"/>
    </location>
</feature>
<dbReference type="EMBL" id="AF271159">
    <property type="protein sequence ID" value="AAG53603.1"/>
    <property type="molecule type" value="mRNA"/>
</dbReference>
<dbReference type="EMBL" id="AF298880">
    <property type="protein sequence ID" value="AAG17907.1"/>
    <property type="molecule type" value="mRNA"/>
</dbReference>
<dbReference type="EMBL" id="AB033117">
    <property type="protein sequence ID" value="BAA86605.2"/>
    <property type="status" value="ALT_INIT"/>
    <property type="molecule type" value="mRNA"/>
</dbReference>
<dbReference type="EMBL" id="AL355802">
    <property type="status" value="NOT_ANNOTATED_CDS"/>
    <property type="molecule type" value="Genomic_DNA"/>
</dbReference>
<dbReference type="EMBL" id="BC000129">
    <property type="protein sequence ID" value="AAH00129.1"/>
    <property type="status" value="ALT_INIT"/>
    <property type="molecule type" value="mRNA"/>
</dbReference>
<dbReference type="EMBL" id="BC008347">
    <property type="protein sequence ID" value="AAH08347.1"/>
    <property type="molecule type" value="mRNA"/>
</dbReference>
<dbReference type="EMBL" id="BC009969">
    <property type="protein sequence ID" value="AAH09969.2"/>
    <property type="molecule type" value="mRNA"/>
</dbReference>
<dbReference type="EMBL" id="BC062635">
    <property type="protein sequence ID" value="AAH62635.1"/>
    <property type="molecule type" value="mRNA"/>
</dbReference>
<dbReference type="EMBL" id="AL137467">
    <property type="protein sequence ID" value="CAB70753.1"/>
    <property type="molecule type" value="mRNA"/>
</dbReference>
<dbReference type="EMBL" id="AK001195">
    <property type="protein sequence ID" value="BAA91547.1"/>
    <property type="status" value="ALT_FRAME"/>
    <property type="molecule type" value="mRNA"/>
</dbReference>
<dbReference type="EMBL" id="AK022718">
    <property type="protein sequence ID" value="BAB14200.1"/>
    <property type="molecule type" value="mRNA"/>
</dbReference>
<dbReference type="CCDS" id="CCDS47430.1"/>
<dbReference type="PIR" id="T46411">
    <property type="entry name" value="T46411"/>
</dbReference>
<dbReference type="RefSeq" id="NP_065801.1">
    <property type="nucleotide sequence ID" value="NM_020750.3"/>
</dbReference>
<dbReference type="PDB" id="3A6P">
    <property type="method" value="X-ray"/>
    <property type="resolution" value="2.92 A"/>
    <property type="chains" value="A/F=1-1204"/>
</dbReference>
<dbReference type="PDB" id="5YU6">
    <property type="method" value="X-ray"/>
    <property type="resolution" value="3.00 A"/>
    <property type="chains" value="A/C=1-1204"/>
</dbReference>
<dbReference type="PDB" id="5YU7">
    <property type="method" value="X-ray"/>
    <property type="resolution" value="3.30 A"/>
    <property type="chains" value="A=1-1204"/>
</dbReference>
<dbReference type="PDBsum" id="3A6P"/>
<dbReference type="PDBsum" id="5YU6"/>
<dbReference type="PDBsum" id="5YU7"/>
<dbReference type="SMR" id="Q9HAV4"/>
<dbReference type="BioGRID" id="121574">
    <property type="interactions" value="256"/>
</dbReference>
<dbReference type="CORUM" id="Q9HAV4"/>
<dbReference type="DIP" id="DIP-34547N"/>
<dbReference type="FunCoup" id="Q9HAV4">
    <property type="interactions" value="4000"/>
</dbReference>
<dbReference type="IntAct" id="Q9HAV4">
    <property type="interactions" value="112"/>
</dbReference>
<dbReference type="MINT" id="Q9HAV4"/>
<dbReference type="STRING" id="9606.ENSP00000265351"/>
<dbReference type="TCDB" id="1.I.1.1.3">
    <property type="family name" value="the nuclear pore complex (npc) family"/>
</dbReference>
<dbReference type="GlyGen" id="Q9HAV4">
    <property type="glycosylation" value="2 sites, 1 O-linked glycan (1 site)"/>
</dbReference>
<dbReference type="iPTMnet" id="Q9HAV4"/>
<dbReference type="MetOSite" id="Q9HAV4"/>
<dbReference type="PhosphoSitePlus" id="Q9HAV4"/>
<dbReference type="SwissPalm" id="Q9HAV4"/>
<dbReference type="BioMuta" id="XPO5"/>
<dbReference type="DMDM" id="74734245"/>
<dbReference type="CPTAC" id="CPTAC-140"/>
<dbReference type="CPTAC" id="CPTAC-141"/>
<dbReference type="jPOST" id="Q9HAV4"/>
<dbReference type="MassIVE" id="Q9HAV4"/>
<dbReference type="PaxDb" id="9606-ENSP00000265351"/>
<dbReference type="PeptideAtlas" id="Q9HAV4"/>
<dbReference type="ProteomicsDB" id="81445"/>
<dbReference type="Pumba" id="Q9HAV4"/>
<dbReference type="Antibodypedia" id="3239">
    <property type="antibodies" value="232 antibodies from 31 providers"/>
</dbReference>
<dbReference type="DNASU" id="57510"/>
<dbReference type="Ensembl" id="ENST00000265351.12">
    <property type="protein sequence ID" value="ENSP00000265351.7"/>
    <property type="gene ID" value="ENSG00000124571.18"/>
</dbReference>
<dbReference type="GeneID" id="57510"/>
<dbReference type="KEGG" id="hsa:57510"/>
<dbReference type="MANE-Select" id="ENST00000265351.12">
    <property type="protein sequence ID" value="ENSP00000265351.7"/>
    <property type="RefSeq nucleotide sequence ID" value="NM_020750.3"/>
    <property type="RefSeq protein sequence ID" value="NP_065801.1"/>
</dbReference>
<dbReference type="UCSC" id="uc003ovp.3">
    <property type="organism name" value="human"/>
</dbReference>
<dbReference type="AGR" id="HGNC:17675"/>
<dbReference type="CTD" id="57510"/>
<dbReference type="DisGeNET" id="57510"/>
<dbReference type="GeneCards" id="XPO5"/>
<dbReference type="HGNC" id="HGNC:17675">
    <property type="gene designation" value="XPO5"/>
</dbReference>
<dbReference type="HPA" id="ENSG00000124571">
    <property type="expression patterns" value="Low tissue specificity"/>
</dbReference>
<dbReference type="MalaCards" id="XPO5"/>
<dbReference type="MIM" id="607845">
    <property type="type" value="gene"/>
</dbReference>
<dbReference type="neXtProt" id="NX_Q9HAV4"/>
<dbReference type="OpenTargets" id="ENSG00000124571"/>
<dbReference type="PharmGKB" id="PA134979214"/>
<dbReference type="VEuPathDB" id="HostDB:ENSG00000124571"/>
<dbReference type="eggNOG" id="KOG2020">
    <property type="taxonomic scope" value="Eukaryota"/>
</dbReference>
<dbReference type="GeneTree" id="ENSGT00940000153408"/>
<dbReference type="HOGENOM" id="CLU_002828_0_0_1"/>
<dbReference type="InParanoid" id="Q9HAV4"/>
<dbReference type="OMA" id="IAKRSWG"/>
<dbReference type="OrthoDB" id="2215036at2759"/>
<dbReference type="PAN-GO" id="Q9HAV4">
    <property type="GO annotations" value="6 GO annotations based on evolutionary models"/>
</dbReference>
<dbReference type="PhylomeDB" id="Q9HAV4"/>
<dbReference type="TreeFam" id="TF323382"/>
<dbReference type="PathwayCommons" id="Q9HAV4"/>
<dbReference type="Reactome" id="R-HSA-203927">
    <property type="pathway name" value="MicroRNA (miRNA) biogenesis"/>
</dbReference>
<dbReference type="SignaLink" id="Q9HAV4"/>
<dbReference type="SIGNOR" id="Q9HAV4"/>
<dbReference type="BioGRID-ORCS" id="57510">
    <property type="hits" value="515 hits in 1180 CRISPR screens"/>
</dbReference>
<dbReference type="CD-CODE" id="91857CE7">
    <property type="entry name" value="Nucleolus"/>
</dbReference>
<dbReference type="CD-CODE" id="DEE660B4">
    <property type="entry name" value="Stress granule"/>
</dbReference>
<dbReference type="ChiTaRS" id="XPO5">
    <property type="organism name" value="human"/>
</dbReference>
<dbReference type="EvolutionaryTrace" id="Q9HAV4"/>
<dbReference type="GeneWiki" id="XPO5"/>
<dbReference type="GenomeRNAi" id="57510"/>
<dbReference type="Pharos" id="Q9HAV4">
    <property type="development level" value="Tbio"/>
</dbReference>
<dbReference type="PRO" id="PR:Q9HAV4"/>
<dbReference type="Proteomes" id="UP000005640">
    <property type="component" value="Chromosome 6"/>
</dbReference>
<dbReference type="RNAct" id="Q9HAV4">
    <property type="molecule type" value="protein"/>
</dbReference>
<dbReference type="Bgee" id="ENSG00000124571">
    <property type="expression patterns" value="Expressed in adrenal tissue and 176 other cell types or tissues"/>
</dbReference>
<dbReference type="ExpressionAtlas" id="Q9HAV4">
    <property type="expression patterns" value="baseline and differential"/>
</dbReference>
<dbReference type="GO" id="GO:0005737">
    <property type="term" value="C:cytoplasm"/>
    <property type="evidence" value="ECO:0000314"/>
    <property type="project" value="BHF-UCL"/>
</dbReference>
<dbReference type="GO" id="GO:0005829">
    <property type="term" value="C:cytosol"/>
    <property type="evidence" value="ECO:0000314"/>
    <property type="project" value="HPA"/>
</dbReference>
<dbReference type="GO" id="GO:0005654">
    <property type="term" value="C:nucleoplasm"/>
    <property type="evidence" value="ECO:0000314"/>
    <property type="project" value="HPA"/>
</dbReference>
<dbReference type="GO" id="GO:0005634">
    <property type="term" value="C:nucleus"/>
    <property type="evidence" value="ECO:0000314"/>
    <property type="project" value="BHF-UCL"/>
</dbReference>
<dbReference type="GO" id="GO:0016442">
    <property type="term" value="C:RISC complex"/>
    <property type="evidence" value="ECO:0000314"/>
    <property type="project" value="UniProtKB"/>
</dbReference>
<dbReference type="GO" id="GO:0042565">
    <property type="term" value="C:RNA nuclear export complex"/>
    <property type="evidence" value="ECO:0000314"/>
    <property type="project" value="BHF-UCL"/>
</dbReference>
<dbReference type="GO" id="GO:0003729">
    <property type="term" value="F:mRNA binding"/>
    <property type="evidence" value="ECO:0000314"/>
    <property type="project" value="BHF-UCL"/>
</dbReference>
<dbReference type="GO" id="GO:0005049">
    <property type="term" value="F:nuclear export signal receptor activity"/>
    <property type="evidence" value="ECO:0000315"/>
    <property type="project" value="BHF-UCL"/>
</dbReference>
<dbReference type="GO" id="GO:0070883">
    <property type="term" value="F:pre-miRNA binding"/>
    <property type="evidence" value="ECO:0000314"/>
    <property type="project" value="BHF-UCL"/>
</dbReference>
<dbReference type="GO" id="GO:1905172">
    <property type="term" value="F:RISC complex binding"/>
    <property type="evidence" value="ECO:0000314"/>
    <property type="project" value="GO_Central"/>
</dbReference>
<dbReference type="GO" id="GO:0003723">
    <property type="term" value="F:RNA binding"/>
    <property type="evidence" value="ECO:0007005"/>
    <property type="project" value="UniProtKB"/>
</dbReference>
<dbReference type="GO" id="GO:0031267">
    <property type="term" value="F:small GTPase binding"/>
    <property type="evidence" value="ECO:0000314"/>
    <property type="project" value="BHF-UCL"/>
</dbReference>
<dbReference type="GO" id="GO:0000049">
    <property type="term" value="F:tRNA binding"/>
    <property type="evidence" value="ECO:0007669"/>
    <property type="project" value="UniProtKB-KW"/>
</dbReference>
<dbReference type="GO" id="GO:0010586">
    <property type="term" value="P:miRNA metabolic process"/>
    <property type="evidence" value="ECO:0000304"/>
    <property type="project" value="Reactome"/>
</dbReference>
<dbReference type="GO" id="GO:0035281">
    <property type="term" value="P:pre-miRNA export from nucleus"/>
    <property type="evidence" value="ECO:0000314"/>
    <property type="project" value="BHF-UCL"/>
</dbReference>
<dbReference type="GO" id="GO:0006611">
    <property type="term" value="P:protein export from nucleus"/>
    <property type="evidence" value="ECO:0000314"/>
    <property type="project" value="UniProtKB"/>
</dbReference>
<dbReference type="GO" id="GO:0006405">
    <property type="term" value="P:RNA export from nucleus"/>
    <property type="evidence" value="ECO:0000318"/>
    <property type="project" value="GO_Central"/>
</dbReference>
<dbReference type="FunFam" id="1.25.10.10:FF:000204">
    <property type="entry name" value="Exportin 5"/>
    <property type="match status" value="1"/>
</dbReference>
<dbReference type="Gene3D" id="1.25.10.10">
    <property type="entry name" value="Leucine-rich Repeat Variant"/>
    <property type="match status" value="1"/>
</dbReference>
<dbReference type="InterPro" id="IPR011989">
    <property type="entry name" value="ARM-like"/>
</dbReference>
<dbReference type="InterPro" id="IPR016024">
    <property type="entry name" value="ARM-type_fold"/>
</dbReference>
<dbReference type="InterPro" id="IPR013598">
    <property type="entry name" value="Exportin-1/Importin-b-like"/>
</dbReference>
<dbReference type="InterPro" id="IPR045478">
    <property type="entry name" value="Exportin-5_C"/>
</dbReference>
<dbReference type="InterPro" id="IPR001494">
    <property type="entry name" value="Importin-beta_N"/>
</dbReference>
<dbReference type="InterPro" id="IPR045065">
    <property type="entry name" value="XPO1/5"/>
</dbReference>
<dbReference type="PANTHER" id="PTHR11223">
    <property type="entry name" value="EXPORTIN 1/5"/>
    <property type="match status" value="1"/>
</dbReference>
<dbReference type="PANTHER" id="PTHR11223:SF3">
    <property type="entry name" value="EXPORTIN-5"/>
    <property type="match status" value="1"/>
</dbReference>
<dbReference type="Pfam" id="PF19273">
    <property type="entry name" value="Exportin-5"/>
    <property type="match status" value="1"/>
</dbReference>
<dbReference type="Pfam" id="PF03810">
    <property type="entry name" value="IBN_N"/>
    <property type="match status" value="1"/>
</dbReference>
<dbReference type="Pfam" id="PF08389">
    <property type="entry name" value="Xpo1"/>
    <property type="match status" value="1"/>
</dbReference>
<dbReference type="SMART" id="SM00913">
    <property type="entry name" value="IBN_N"/>
    <property type="match status" value="1"/>
</dbReference>
<dbReference type="SUPFAM" id="SSF48371">
    <property type="entry name" value="ARM repeat"/>
    <property type="match status" value="1"/>
</dbReference>
<name>XPO5_HUMAN</name>
<sequence>MAMDQVNALCEQLVKAVTVMMDPNSTQRYRLEALKFCEEFKEKCPICVPCGLRLAEKTQVAIVRHFGLQILEHVVKFRWNGMSRLEKVYLKNSVMELIANGTLNILEEENHIKDALSRIVVEMIKREWPQHWPDMLIELDTLSKQGETQTELVMFILLRLAEDVVTFQTLPPQRRRDIQQTLTQNMERIFSFLLNTLQENVNKYQQVKTDTSQESKAQANCRVGVAALNTLAGYIDWVSMSHITAENCKLLEILCLLLNEQELQLGAAECLLIAVSRKGKLEDRKPLMVLFGDVAMHYILSAAQTADGGGLVEKHYVFLKRLCQVLCALGNQLCALLGADSDVETPSNFGKYLESFLAFTTHPSQFLRSSTQMTWGALFRHEILSRDPLLLAIIPKYLRASMTNLVKMGFPSKTDSPSCEYSRFDFDSDEDFNAFFNSSRAQQGEVMRLACRLDPKTSFQMAGEWLKYQLSTFLDAGSVNSCSAVGTGEGSLCSVFSPSFVQWEAMTLFLESVITQMFRTLNREEIPVNDGIELLQMVLNFDTKDPLILSCVLTNVSALFPFVTYRPEFLPQVFSKLFSSVTFETVEESKAPRTRAVRNVRRHACSSIIKMCRDYPQLVLPNFDMLYNHVKQLLSNELLLTQMEKCALMEALVLISNQFKNYERQKVFLEELMAPVASIWLSQDMHRVLSDVDAFIAYVGTDQKSCDPGLEDPCGLNRARMSFCVYSILGVVKRTCWPTDLEEAKAGGFVVGYTSSGNPIFRNPCTEQILKLLDNLLALIRTHNTLYAPEMLAKMAEPFTKALDMLDAEKSAILGLPQPLLELNDSPVFKTVLERMQRFFSTLYENCFHILGKAGPSMQQDFYTVEDLATQLLSSAFVNLNNIPDYRLRPMLRVFVKPLVLFCPPEHYEALVSPILGPLFTYLHMRLSQKWQVINQRSLLCGEDEAADENPESQEMLEEQLVRMLTREVMDLITVCCVSKKGADHSSAPPADGDDEEMMATEVTPSAMAELTDLGKCLMKHEDVCTALLITAFNSLAWKDTLSCQRTTSQLCWPLLKQVLSGTLLADAVTWLFTSVLKGLQMHGQHDGCMASLVHLAFQIYEALRPRYLEIRAVMEQIPEIQKDSLDQFDCKLLNPSLQKVADKRRKDQFKRLIAGCIGKPLGEQFRKEVHIKNLPSLFKKTKPMLETEVLDNDGGGLATIFEP</sequence>
<organism>
    <name type="scientific">Homo sapiens</name>
    <name type="common">Human</name>
    <dbReference type="NCBI Taxonomy" id="9606"/>
    <lineage>
        <taxon>Eukaryota</taxon>
        <taxon>Metazoa</taxon>
        <taxon>Chordata</taxon>
        <taxon>Craniata</taxon>
        <taxon>Vertebrata</taxon>
        <taxon>Euteleostomi</taxon>
        <taxon>Mammalia</taxon>
        <taxon>Eutheria</taxon>
        <taxon>Euarchontoglires</taxon>
        <taxon>Primates</taxon>
        <taxon>Haplorrhini</taxon>
        <taxon>Catarrhini</taxon>
        <taxon>Hominidae</taxon>
        <taxon>Homo</taxon>
    </lineage>
</organism>
<proteinExistence type="evidence at protein level"/>
<keyword id="KW-0002">3D-structure</keyword>
<keyword id="KW-0007">Acetylation</keyword>
<keyword id="KW-0963">Cytoplasm</keyword>
<keyword id="KW-0903">Direct protein sequencing</keyword>
<keyword id="KW-0945">Host-virus interaction</keyword>
<keyword id="KW-0539">Nucleus</keyword>
<keyword id="KW-0597">Phosphoprotein</keyword>
<keyword id="KW-0653">Protein transport</keyword>
<keyword id="KW-1267">Proteomics identification</keyword>
<keyword id="KW-1185">Reference proteome</keyword>
<keyword id="KW-0694">RNA-binding</keyword>
<keyword id="KW-0943">RNA-mediated gene silencing</keyword>
<keyword id="KW-0813">Transport</keyword>
<keyword id="KW-0820">tRNA-binding</keyword>